<accession>A0KAB6</accession>
<organism>
    <name type="scientific">Burkholderia cenocepacia (strain HI2424)</name>
    <dbReference type="NCBI Taxonomy" id="331272"/>
    <lineage>
        <taxon>Bacteria</taxon>
        <taxon>Pseudomonadati</taxon>
        <taxon>Pseudomonadota</taxon>
        <taxon>Betaproteobacteria</taxon>
        <taxon>Burkholderiales</taxon>
        <taxon>Burkholderiaceae</taxon>
        <taxon>Burkholderia</taxon>
        <taxon>Burkholderia cepacia complex</taxon>
    </lineage>
</organism>
<proteinExistence type="inferred from homology"/>
<keyword id="KW-0004">4Fe-4S</keyword>
<keyword id="KW-0963">Cytoplasm</keyword>
<keyword id="KW-0408">Iron</keyword>
<keyword id="KW-0411">Iron-sulfur</keyword>
<keyword id="KW-0479">Metal-binding</keyword>
<keyword id="KW-0949">S-adenosyl-L-methionine</keyword>
<keyword id="KW-0808">Transferase</keyword>
<keyword id="KW-0819">tRNA processing</keyword>
<protein>
    <recommendedName>
        <fullName evidence="1">tRNA-2-methylthio-N(6)-dimethylallyladenosine synthase</fullName>
        <ecNumber evidence="1">2.8.4.3</ecNumber>
    </recommendedName>
    <alternativeName>
        <fullName evidence="1">(Dimethylallyl)adenosine tRNA methylthiotransferase MiaB</fullName>
    </alternativeName>
    <alternativeName>
        <fullName evidence="1">tRNA-i(6)A37 methylthiotransferase</fullName>
    </alternativeName>
</protein>
<name>MIAB_BURCH</name>
<reference key="1">
    <citation type="submission" date="2006-08" db="EMBL/GenBank/DDBJ databases">
        <title>Complete sequence of chromosome 1 of Burkholderia cenocepacia HI2424.</title>
        <authorList>
            <person name="Copeland A."/>
            <person name="Lucas S."/>
            <person name="Lapidus A."/>
            <person name="Barry K."/>
            <person name="Detter J.C."/>
            <person name="Glavina del Rio T."/>
            <person name="Hammon N."/>
            <person name="Israni S."/>
            <person name="Pitluck S."/>
            <person name="Chain P."/>
            <person name="Malfatti S."/>
            <person name="Shin M."/>
            <person name="Vergez L."/>
            <person name="Schmutz J."/>
            <person name="Larimer F."/>
            <person name="Land M."/>
            <person name="Hauser L."/>
            <person name="Kyrpides N."/>
            <person name="Kim E."/>
            <person name="LiPuma J.J."/>
            <person name="Gonzalez C.F."/>
            <person name="Konstantinidis K."/>
            <person name="Tiedje J.M."/>
            <person name="Richardson P."/>
        </authorList>
    </citation>
    <scope>NUCLEOTIDE SEQUENCE [LARGE SCALE GENOMIC DNA]</scope>
    <source>
        <strain>HI2424</strain>
    </source>
</reference>
<comment type="function">
    <text evidence="1">Catalyzes the methylthiolation of N6-(dimethylallyl)adenosine (i(6)A), leading to the formation of 2-methylthio-N6-(dimethylallyl)adenosine (ms(2)i(6)A) at position 37 in tRNAs that read codons beginning with uridine.</text>
</comment>
<comment type="catalytic activity">
    <reaction evidence="1">
        <text>N(6)-dimethylallyladenosine(37) in tRNA + (sulfur carrier)-SH + AH2 + 2 S-adenosyl-L-methionine = 2-methylsulfanyl-N(6)-dimethylallyladenosine(37) in tRNA + (sulfur carrier)-H + 5'-deoxyadenosine + L-methionine + A + S-adenosyl-L-homocysteine + 2 H(+)</text>
        <dbReference type="Rhea" id="RHEA:37067"/>
        <dbReference type="Rhea" id="RHEA-COMP:10375"/>
        <dbReference type="Rhea" id="RHEA-COMP:10376"/>
        <dbReference type="Rhea" id="RHEA-COMP:14737"/>
        <dbReference type="Rhea" id="RHEA-COMP:14739"/>
        <dbReference type="ChEBI" id="CHEBI:13193"/>
        <dbReference type="ChEBI" id="CHEBI:15378"/>
        <dbReference type="ChEBI" id="CHEBI:17319"/>
        <dbReference type="ChEBI" id="CHEBI:17499"/>
        <dbReference type="ChEBI" id="CHEBI:29917"/>
        <dbReference type="ChEBI" id="CHEBI:57844"/>
        <dbReference type="ChEBI" id="CHEBI:57856"/>
        <dbReference type="ChEBI" id="CHEBI:59789"/>
        <dbReference type="ChEBI" id="CHEBI:64428"/>
        <dbReference type="ChEBI" id="CHEBI:74415"/>
        <dbReference type="ChEBI" id="CHEBI:74417"/>
        <dbReference type="EC" id="2.8.4.3"/>
    </reaction>
</comment>
<comment type="cofactor">
    <cofactor evidence="1">
        <name>[4Fe-4S] cluster</name>
        <dbReference type="ChEBI" id="CHEBI:49883"/>
    </cofactor>
    <text evidence="1">Binds 2 [4Fe-4S] clusters. One cluster is coordinated with 3 cysteines and an exchangeable S-adenosyl-L-methionine.</text>
</comment>
<comment type="subunit">
    <text evidence="1">Monomer.</text>
</comment>
<comment type="subcellular location">
    <subcellularLocation>
        <location evidence="1">Cytoplasm</location>
    </subcellularLocation>
</comment>
<comment type="similarity">
    <text evidence="1">Belongs to the methylthiotransferase family. MiaB subfamily.</text>
</comment>
<gene>
    <name evidence="1" type="primary">miaB</name>
    <name type="ordered locus">Bcen2424_2693</name>
</gene>
<evidence type="ECO:0000255" key="1">
    <source>
        <dbReference type="HAMAP-Rule" id="MF_01864"/>
    </source>
</evidence>
<evidence type="ECO:0000255" key="2">
    <source>
        <dbReference type="PROSITE-ProRule" id="PRU01266"/>
    </source>
</evidence>
<dbReference type="EC" id="2.8.4.3" evidence="1"/>
<dbReference type="EMBL" id="CP000458">
    <property type="protein sequence ID" value="ABK09443.1"/>
    <property type="molecule type" value="Genomic_DNA"/>
</dbReference>
<dbReference type="RefSeq" id="WP_006477875.1">
    <property type="nucleotide sequence ID" value="NC_008542.1"/>
</dbReference>
<dbReference type="SMR" id="A0KAB6"/>
<dbReference type="GeneID" id="83049506"/>
<dbReference type="KEGG" id="bch:Bcen2424_2693"/>
<dbReference type="HOGENOM" id="CLU_018697_2_0_4"/>
<dbReference type="GO" id="GO:0005829">
    <property type="term" value="C:cytosol"/>
    <property type="evidence" value="ECO:0007669"/>
    <property type="project" value="TreeGrafter"/>
</dbReference>
<dbReference type="GO" id="GO:0051539">
    <property type="term" value="F:4 iron, 4 sulfur cluster binding"/>
    <property type="evidence" value="ECO:0007669"/>
    <property type="project" value="UniProtKB-UniRule"/>
</dbReference>
<dbReference type="GO" id="GO:0046872">
    <property type="term" value="F:metal ion binding"/>
    <property type="evidence" value="ECO:0007669"/>
    <property type="project" value="UniProtKB-KW"/>
</dbReference>
<dbReference type="GO" id="GO:0035597">
    <property type="term" value="F:N6-isopentenyladenosine methylthiotransferase activity"/>
    <property type="evidence" value="ECO:0007669"/>
    <property type="project" value="TreeGrafter"/>
</dbReference>
<dbReference type="CDD" id="cd01335">
    <property type="entry name" value="Radical_SAM"/>
    <property type="match status" value="1"/>
</dbReference>
<dbReference type="FunFam" id="3.40.50.12160:FF:000001">
    <property type="entry name" value="tRNA-2-methylthio-N(6)-dimethylallyladenosine synthase"/>
    <property type="match status" value="1"/>
</dbReference>
<dbReference type="FunFam" id="3.80.30.20:FF:000001">
    <property type="entry name" value="tRNA-2-methylthio-N(6)-dimethylallyladenosine synthase 2"/>
    <property type="match status" value="1"/>
</dbReference>
<dbReference type="Gene3D" id="3.40.50.12160">
    <property type="entry name" value="Methylthiotransferase, N-terminal domain"/>
    <property type="match status" value="1"/>
</dbReference>
<dbReference type="Gene3D" id="3.80.30.20">
    <property type="entry name" value="tm_1862 like domain"/>
    <property type="match status" value="1"/>
</dbReference>
<dbReference type="HAMAP" id="MF_01864">
    <property type="entry name" value="tRNA_metthiotr_MiaB"/>
    <property type="match status" value="1"/>
</dbReference>
<dbReference type="InterPro" id="IPR006638">
    <property type="entry name" value="Elp3/MiaA/NifB-like_rSAM"/>
</dbReference>
<dbReference type="InterPro" id="IPR005839">
    <property type="entry name" value="Methylthiotransferase"/>
</dbReference>
<dbReference type="InterPro" id="IPR020612">
    <property type="entry name" value="Methylthiotransferase_CS"/>
</dbReference>
<dbReference type="InterPro" id="IPR013848">
    <property type="entry name" value="Methylthiotransferase_N"/>
</dbReference>
<dbReference type="InterPro" id="IPR038135">
    <property type="entry name" value="Methylthiotransferase_N_sf"/>
</dbReference>
<dbReference type="InterPro" id="IPR006463">
    <property type="entry name" value="MiaB_methiolase"/>
</dbReference>
<dbReference type="InterPro" id="IPR007197">
    <property type="entry name" value="rSAM"/>
</dbReference>
<dbReference type="InterPro" id="IPR023404">
    <property type="entry name" value="rSAM_horseshoe"/>
</dbReference>
<dbReference type="InterPro" id="IPR002792">
    <property type="entry name" value="TRAM_dom"/>
</dbReference>
<dbReference type="NCBIfam" id="TIGR01574">
    <property type="entry name" value="miaB-methiolase"/>
    <property type="match status" value="1"/>
</dbReference>
<dbReference type="NCBIfam" id="TIGR00089">
    <property type="entry name" value="MiaB/RimO family radical SAM methylthiotransferase"/>
    <property type="match status" value="1"/>
</dbReference>
<dbReference type="PANTHER" id="PTHR43020">
    <property type="entry name" value="CDK5 REGULATORY SUBUNIT-ASSOCIATED PROTEIN 1"/>
    <property type="match status" value="1"/>
</dbReference>
<dbReference type="PANTHER" id="PTHR43020:SF2">
    <property type="entry name" value="MITOCHONDRIAL TRNA METHYLTHIOTRANSFERASE CDK5RAP1"/>
    <property type="match status" value="1"/>
</dbReference>
<dbReference type="Pfam" id="PF04055">
    <property type="entry name" value="Radical_SAM"/>
    <property type="match status" value="1"/>
</dbReference>
<dbReference type="Pfam" id="PF01938">
    <property type="entry name" value="TRAM"/>
    <property type="match status" value="1"/>
</dbReference>
<dbReference type="Pfam" id="PF00919">
    <property type="entry name" value="UPF0004"/>
    <property type="match status" value="1"/>
</dbReference>
<dbReference type="SFLD" id="SFLDF00273">
    <property type="entry name" value="(dimethylallyl)adenosine_tRNA"/>
    <property type="match status" value="1"/>
</dbReference>
<dbReference type="SFLD" id="SFLDG01082">
    <property type="entry name" value="B12-binding_domain_containing"/>
    <property type="match status" value="1"/>
</dbReference>
<dbReference type="SFLD" id="SFLDS00029">
    <property type="entry name" value="Radical_SAM"/>
    <property type="match status" value="1"/>
</dbReference>
<dbReference type="SMART" id="SM00729">
    <property type="entry name" value="Elp3"/>
    <property type="match status" value="1"/>
</dbReference>
<dbReference type="SUPFAM" id="SSF102114">
    <property type="entry name" value="Radical SAM enzymes"/>
    <property type="match status" value="1"/>
</dbReference>
<dbReference type="PROSITE" id="PS51449">
    <property type="entry name" value="MTTASE_N"/>
    <property type="match status" value="1"/>
</dbReference>
<dbReference type="PROSITE" id="PS01278">
    <property type="entry name" value="MTTASE_RADICAL"/>
    <property type="match status" value="1"/>
</dbReference>
<dbReference type="PROSITE" id="PS51918">
    <property type="entry name" value="RADICAL_SAM"/>
    <property type="match status" value="1"/>
</dbReference>
<dbReference type="PROSITE" id="PS50926">
    <property type="entry name" value="TRAM"/>
    <property type="match status" value="1"/>
</dbReference>
<sequence length="457" mass="50589">MTKKVYVKTFGCQMNEYDSDKMVDVLNAAEGLEKTDTPEDADIILFNTCSVREKAQEKVFSDLGRVRELKEAKPGLLIGVGGCVASQEGASIVSRAPYVDLVFGPQTLHRLPQMIDARRASGRAQVDITFPEIEKFDHLPPARVEGPSAFVSIMEGCSKYCSYCVVPYTRGDEVSRPLDDVLTEVAGLADQGVREVTLLGQNVNAYRGALTAGSTDIADFATLIEYVADIPGIERIRYTTSHPKEFTQRLIDTYAKVPKLVSHLHLPVQHGSDRILMAMKRGYTVLEYKSVIRKLRAIRPDLSLSTDMIVGFPGETEDDFDKMMALVHEMGYDTSFSFIYSPRPGTPAANLADDTPREVKLKRLQHLQATIEENVARISQSMVGKVERILVEGPSRKDPNELAGRTENNRVVNFPAPLASHPRLIGQMIDVKINHAYPHSLRGELVLVSDDASTATH</sequence>
<feature type="chain" id="PRO_0000374175" description="tRNA-2-methylthio-N(6)-dimethylallyladenosine synthase">
    <location>
        <begin position="1"/>
        <end position="457"/>
    </location>
</feature>
<feature type="domain" description="MTTase N-terminal" evidence="1">
    <location>
        <begin position="3"/>
        <end position="120"/>
    </location>
</feature>
<feature type="domain" description="Radical SAM core" evidence="2">
    <location>
        <begin position="143"/>
        <end position="377"/>
    </location>
</feature>
<feature type="domain" description="TRAM" evidence="1">
    <location>
        <begin position="380"/>
        <end position="447"/>
    </location>
</feature>
<feature type="binding site" evidence="1">
    <location>
        <position position="12"/>
    </location>
    <ligand>
        <name>[4Fe-4S] cluster</name>
        <dbReference type="ChEBI" id="CHEBI:49883"/>
        <label>1</label>
    </ligand>
</feature>
<feature type="binding site" evidence="1">
    <location>
        <position position="49"/>
    </location>
    <ligand>
        <name>[4Fe-4S] cluster</name>
        <dbReference type="ChEBI" id="CHEBI:49883"/>
        <label>1</label>
    </ligand>
</feature>
<feature type="binding site" evidence="1">
    <location>
        <position position="83"/>
    </location>
    <ligand>
        <name>[4Fe-4S] cluster</name>
        <dbReference type="ChEBI" id="CHEBI:49883"/>
        <label>1</label>
    </ligand>
</feature>
<feature type="binding site" evidence="1">
    <location>
        <position position="157"/>
    </location>
    <ligand>
        <name>[4Fe-4S] cluster</name>
        <dbReference type="ChEBI" id="CHEBI:49883"/>
        <label>2</label>
        <note>4Fe-4S-S-AdoMet</note>
    </ligand>
</feature>
<feature type="binding site" evidence="1">
    <location>
        <position position="161"/>
    </location>
    <ligand>
        <name>[4Fe-4S] cluster</name>
        <dbReference type="ChEBI" id="CHEBI:49883"/>
        <label>2</label>
        <note>4Fe-4S-S-AdoMet</note>
    </ligand>
</feature>
<feature type="binding site" evidence="1">
    <location>
        <position position="164"/>
    </location>
    <ligand>
        <name>[4Fe-4S] cluster</name>
        <dbReference type="ChEBI" id="CHEBI:49883"/>
        <label>2</label>
        <note>4Fe-4S-S-AdoMet</note>
    </ligand>
</feature>